<reference key="1">
    <citation type="journal article" date="2008" name="PLoS Genet.">
        <title>Genomic islands in the pathogenic filamentous fungus Aspergillus fumigatus.</title>
        <authorList>
            <person name="Fedorova N.D."/>
            <person name="Khaldi N."/>
            <person name="Joardar V.S."/>
            <person name="Maiti R."/>
            <person name="Amedeo P."/>
            <person name="Anderson M.J."/>
            <person name="Crabtree J."/>
            <person name="Silva J.C."/>
            <person name="Badger J.H."/>
            <person name="Albarraq A."/>
            <person name="Angiuoli S."/>
            <person name="Bussey H."/>
            <person name="Bowyer P."/>
            <person name="Cotty P.J."/>
            <person name="Dyer P.S."/>
            <person name="Egan A."/>
            <person name="Galens K."/>
            <person name="Fraser-Liggett C.M."/>
            <person name="Haas B.J."/>
            <person name="Inman J.M."/>
            <person name="Kent R."/>
            <person name="Lemieux S."/>
            <person name="Malavazi I."/>
            <person name="Orvis J."/>
            <person name="Roemer T."/>
            <person name="Ronning C.M."/>
            <person name="Sundaram J.P."/>
            <person name="Sutton G."/>
            <person name="Turner G."/>
            <person name="Venter J.C."/>
            <person name="White O.R."/>
            <person name="Whitty B.R."/>
            <person name="Youngman P."/>
            <person name="Wolfe K.H."/>
            <person name="Goldman G.H."/>
            <person name="Wortman J.R."/>
            <person name="Jiang B."/>
            <person name="Denning D.W."/>
            <person name="Nierman W.C."/>
        </authorList>
    </citation>
    <scope>NUCLEOTIDE SEQUENCE [LARGE SCALE GENOMIC DNA]</scope>
    <source>
        <strain>ATCC 1020 / DSM 3700 / CBS 544.65 / FGSC A1164 / JCM 1740 / NRRL 181 / WB 181</strain>
    </source>
</reference>
<evidence type="ECO:0000250" key="1"/>
<evidence type="ECO:0000255" key="2"/>
<evidence type="ECO:0000256" key="3">
    <source>
        <dbReference type="SAM" id="MobiDB-lite"/>
    </source>
</evidence>
<evidence type="ECO:0000305" key="4"/>
<feature type="signal peptide" evidence="2">
    <location>
        <begin position="1"/>
        <end position="17"/>
    </location>
</feature>
<feature type="chain" id="PRO_0000394579" description="Probable pectate lyase D">
    <location>
        <begin position="18"/>
        <end position="241"/>
    </location>
</feature>
<feature type="region of interest" description="Disordered" evidence="3">
    <location>
        <begin position="215"/>
        <end position="241"/>
    </location>
</feature>
<feature type="glycosylation site" description="N-linked (GlcNAc...) asparagine" evidence="2">
    <location>
        <position position="215"/>
    </location>
</feature>
<accession>A1DCY5</accession>
<comment type="function">
    <text evidence="1">Pectinolytic enzyme consist of four classes of enzymes: pectin lyase, polygalacturonase, pectin methylesterase and rhamnogalacturonase. Among pectinolytic enzymes, pectin lyase is the most important in depolymerization of pectin, since it cleaves internal glycosidic bonds of highly methylated pectins. Favors pectate, the anion, over pectin, the methyl ester (By similarity).</text>
</comment>
<comment type="catalytic activity">
    <reaction>
        <text>Eliminative cleavage of (1-&gt;4)-alpha-D-galacturonan to give oligosaccharides with 4-deoxy-alpha-D-galact-4-enuronosyl groups at their non-reducing ends.</text>
        <dbReference type="EC" id="4.2.2.2"/>
    </reaction>
</comment>
<comment type="cofactor">
    <cofactor evidence="1">
        <name>Ca(2+)</name>
        <dbReference type="ChEBI" id="CHEBI:29108"/>
    </cofactor>
    <text evidence="1">Binds 1 Ca(2+) ion per subunit.</text>
</comment>
<comment type="subcellular location">
    <subcellularLocation>
        <location evidence="1">Secreted</location>
    </subcellularLocation>
</comment>
<comment type="similarity">
    <text evidence="4">Belongs to the polysaccharide lyase 3 family.</text>
</comment>
<sequence length="241" mass="25224">MYQKSLLFSLLATSALAQFPIPDSKGSVTFDAPYEVAAGKTYDGGYKTYGRGVSCSGQGEGGQDDAVFLIQEGGTLKNAIIGSDQIEGVYCLGACTIENVWWEAVCEDALSLKGGSGPYNIIGGGAQGADDKVIQHNSGGQVNIDGFTVYDFGKLYRSCGNCDEQHARTVTIRNVVANSGKTLVGINSNLGDTASIDSSTCATDVKKICVEYKGNNSGDEPEEVSEGPSDACQYSEPLSSC</sequence>
<protein>
    <recommendedName>
        <fullName>Probable pectate lyase D</fullName>
        <ecNumber>4.2.2.2</ecNumber>
    </recommendedName>
</protein>
<keyword id="KW-0106">Calcium</keyword>
<keyword id="KW-0119">Carbohydrate metabolism</keyword>
<keyword id="KW-0961">Cell wall biogenesis/degradation</keyword>
<keyword id="KW-0325">Glycoprotein</keyword>
<keyword id="KW-0456">Lyase</keyword>
<keyword id="KW-0624">Polysaccharide degradation</keyword>
<keyword id="KW-1185">Reference proteome</keyword>
<keyword id="KW-0964">Secreted</keyword>
<keyword id="KW-0732">Signal</keyword>
<gene>
    <name type="primary">plyD</name>
    <name type="ORF">NFIA_027690</name>
</gene>
<proteinExistence type="inferred from homology"/>
<dbReference type="EC" id="4.2.2.2"/>
<dbReference type="EMBL" id="DS027695">
    <property type="protein sequence ID" value="EAW19695.1"/>
    <property type="molecule type" value="Genomic_DNA"/>
</dbReference>
<dbReference type="RefSeq" id="XP_001261592.1">
    <property type="nucleotide sequence ID" value="XM_001261591.1"/>
</dbReference>
<dbReference type="SMR" id="A1DCY5"/>
<dbReference type="STRING" id="331117.A1DCY5"/>
<dbReference type="GlyCosmos" id="A1DCY5">
    <property type="glycosylation" value="1 site, No reported glycans"/>
</dbReference>
<dbReference type="EnsemblFungi" id="EAW19695">
    <property type="protein sequence ID" value="EAW19695"/>
    <property type="gene ID" value="NFIA_027690"/>
</dbReference>
<dbReference type="GeneID" id="4588040"/>
<dbReference type="KEGG" id="nfi:NFIA_027690"/>
<dbReference type="VEuPathDB" id="FungiDB:NFIA_027690"/>
<dbReference type="eggNOG" id="ENOG502RYK9">
    <property type="taxonomic scope" value="Eukaryota"/>
</dbReference>
<dbReference type="HOGENOM" id="CLU_044863_3_0_1"/>
<dbReference type="OMA" id="CDEQHAR"/>
<dbReference type="OrthoDB" id="441042at2759"/>
<dbReference type="Proteomes" id="UP000006702">
    <property type="component" value="Unassembled WGS sequence"/>
</dbReference>
<dbReference type="GO" id="GO:0005576">
    <property type="term" value="C:extracellular region"/>
    <property type="evidence" value="ECO:0007669"/>
    <property type="project" value="UniProtKB-SubCell"/>
</dbReference>
<dbReference type="GO" id="GO:0030570">
    <property type="term" value="F:pectate lyase activity"/>
    <property type="evidence" value="ECO:0007669"/>
    <property type="project" value="UniProtKB-EC"/>
</dbReference>
<dbReference type="GO" id="GO:0071555">
    <property type="term" value="P:cell wall organization"/>
    <property type="evidence" value="ECO:0007669"/>
    <property type="project" value="UniProtKB-KW"/>
</dbReference>
<dbReference type="GO" id="GO:0045490">
    <property type="term" value="P:pectin catabolic process"/>
    <property type="evidence" value="ECO:0007669"/>
    <property type="project" value="TreeGrafter"/>
</dbReference>
<dbReference type="Gene3D" id="2.160.20.10">
    <property type="entry name" value="Single-stranded right-handed beta-helix, Pectin lyase-like"/>
    <property type="match status" value="1"/>
</dbReference>
<dbReference type="InterPro" id="IPR004898">
    <property type="entry name" value="Pectate_lyase_PlyH/PlyE-like"/>
</dbReference>
<dbReference type="InterPro" id="IPR012334">
    <property type="entry name" value="Pectin_lyas_fold"/>
</dbReference>
<dbReference type="InterPro" id="IPR011050">
    <property type="entry name" value="Pectin_lyase_fold/virulence"/>
</dbReference>
<dbReference type="PANTHER" id="PTHR33407">
    <property type="entry name" value="PECTATE LYASE F-RELATED"/>
    <property type="match status" value="1"/>
</dbReference>
<dbReference type="PANTHER" id="PTHR33407:SF11">
    <property type="entry name" value="PECTATE LYASE H-RELATED"/>
    <property type="match status" value="1"/>
</dbReference>
<dbReference type="Pfam" id="PF03211">
    <property type="entry name" value="Pectate_lyase"/>
    <property type="match status" value="1"/>
</dbReference>
<dbReference type="SUPFAM" id="SSF51126">
    <property type="entry name" value="Pectin lyase-like"/>
    <property type="match status" value="1"/>
</dbReference>
<name>PLYD_NEOFI</name>
<organism>
    <name type="scientific">Neosartorya fischeri (strain ATCC 1020 / DSM 3700 / CBS 544.65 / FGSC A1164 / JCM 1740 / NRRL 181 / WB 181)</name>
    <name type="common">Aspergillus fischerianus</name>
    <dbReference type="NCBI Taxonomy" id="331117"/>
    <lineage>
        <taxon>Eukaryota</taxon>
        <taxon>Fungi</taxon>
        <taxon>Dikarya</taxon>
        <taxon>Ascomycota</taxon>
        <taxon>Pezizomycotina</taxon>
        <taxon>Eurotiomycetes</taxon>
        <taxon>Eurotiomycetidae</taxon>
        <taxon>Eurotiales</taxon>
        <taxon>Aspergillaceae</taxon>
        <taxon>Aspergillus</taxon>
        <taxon>Aspergillus subgen. Fumigati</taxon>
    </lineage>
</organism>